<feature type="signal peptide" evidence="5">
    <location>
        <begin position="1"/>
        <end position="36"/>
    </location>
</feature>
<feature type="chain" id="PRO_0000429618" description="Endo-1,4-beta-xylanase 2">
    <location>
        <begin position="37"/>
        <end position="227"/>
    </location>
</feature>
<feature type="domain" description="GH11" evidence="2">
    <location>
        <begin position="37"/>
        <end position="225"/>
    </location>
</feature>
<feature type="active site" description="Nucleophile" evidence="3">
    <location>
        <position position="121"/>
    </location>
</feature>
<feature type="active site" description="Proton donor" evidence="4">
    <location>
        <position position="212"/>
    </location>
</feature>
<feature type="glycosylation site" description="N-linked (GlcNAc...) asparagine" evidence="1">
    <location>
        <position position="29"/>
    </location>
</feature>
<organism>
    <name type="scientific">Humicola insolens</name>
    <name type="common">Soft-rot fungus</name>
    <dbReference type="NCBI Taxonomy" id="85995"/>
    <lineage>
        <taxon>Eukaryota</taxon>
        <taxon>Fungi</taxon>
        <taxon>Dikarya</taxon>
        <taxon>Ascomycota</taxon>
        <taxon>Pezizomycotina</taxon>
        <taxon>Sordariomycetes</taxon>
        <taxon>Sordariomycetidae</taxon>
        <taxon>Sordariales</taxon>
        <taxon>Chaetomiaceae</taxon>
        <taxon>Mycothermus</taxon>
    </lineage>
</organism>
<proteinExistence type="evidence at protein level"/>
<protein>
    <recommendedName>
        <fullName>Endo-1,4-beta-xylanase 2</fullName>
        <shortName>Xylanase 2</shortName>
        <ecNumber>3.2.1.8</ecNumber>
    </recommendedName>
    <alternativeName>
        <fullName>1,4-beta-D-xylan xylanohydrolase 2</fullName>
    </alternativeName>
</protein>
<gene>
    <name type="primary">xyn2</name>
</gene>
<accession>Q9HGE1</accession>
<comment type="function">
    <text evidence="5">Endo-1,4-beta-xylanase involved in the hydrolysis of xylan, a major structural heterogeneous polysaccharide found in plant biomass representing the second most abundant polysaccharide in the biosphere, after cellulose.</text>
</comment>
<comment type="catalytic activity">
    <reaction evidence="5">
        <text>Endohydrolysis of (1-&gt;4)-beta-D-xylosidic linkages in xylans.</text>
        <dbReference type="EC" id="3.2.1.8"/>
    </reaction>
</comment>
<comment type="pathway">
    <text>Glycan degradation; xylan degradation.</text>
</comment>
<comment type="subcellular location">
    <subcellularLocation>
        <location evidence="5">Secreted</location>
    </subcellularLocation>
</comment>
<comment type="similarity">
    <text evidence="6">Belongs to the glycosyl hydrolase 11 (cellulase G) family.</text>
</comment>
<dbReference type="EC" id="3.2.1.8"/>
<dbReference type="EMBL" id="AF155594">
    <property type="protein sequence ID" value="AAG16891.1"/>
    <property type="molecule type" value="Genomic_DNA"/>
</dbReference>
<dbReference type="SMR" id="Q9HGE1"/>
<dbReference type="CAZy" id="GH11">
    <property type="family name" value="Glycoside Hydrolase Family 11"/>
</dbReference>
<dbReference type="GlyCosmos" id="Q9HGE1">
    <property type="glycosylation" value="1 site, No reported glycans"/>
</dbReference>
<dbReference type="UniPathway" id="UPA00114"/>
<dbReference type="GO" id="GO:0005576">
    <property type="term" value="C:extracellular region"/>
    <property type="evidence" value="ECO:0007669"/>
    <property type="project" value="UniProtKB-SubCell"/>
</dbReference>
<dbReference type="GO" id="GO:0031176">
    <property type="term" value="F:endo-1,4-beta-xylanase activity"/>
    <property type="evidence" value="ECO:0007669"/>
    <property type="project" value="UniProtKB-EC"/>
</dbReference>
<dbReference type="GO" id="GO:0045493">
    <property type="term" value="P:xylan catabolic process"/>
    <property type="evidence" value="ECO:0007669"/>
    <property type="project" value="UniProtKB-UniPathway"/>
</dbReference>
<dbReference type="FunFam" id="2.60.120.180:FF:000001">
    <property type="entry name" value="Endo-1,4-beta-xylanase"/>
    <property type="match status" value="1"/>
</dbReference>
<dbReference type="Gene3D" id="2.60.120.180">
    <property type="match status" value="1"/>
</dbReference>
<dbReference type="InterPro" id="IPR013320">
    <property type="entry name" value="ConA-like_dom_sf"/>
</dbReference>
<dbReference type="InterPro" id="IPR013319">
    <property type="entry name" value="GH11/12"/>
</dbReference>
<dbReference type="InterPro" id="IPR018208">
    <property type="entry name" value="GH11_AS_1"/>
</dbReference>
<dbReference type="InterPro" id="IPR033119">
    <property type="entry name" value="GH11_AS_2"/>
</dbReference>
<dbReference type="InterPro" id="IPR033123">
    <property type="entry name" value="GH11_dom"/>
</dbReference>
<dbReference type="InterPro" id="IPR001137">
    <property type="entry name" value="Glyco_hydro_11"/>
</dbReference>
<dbReference type="PANTHER" id="PTHR46828">
    <property type="entry name" value="ENDO-1,4-BETA-XYLANASE A-RELATED"/>
    <property type="match status" value="1"/>
</dbReference>
<dbReference type="PANTHER" id="PTHR46828:SF2">
    <property type="entry name" value="ENDO-1,4-BETA-XYLANASE A-RELATED"/>
    <property type="match status" value="1"/>
</dbReference>
<dbReference type="Pfam" id="PF00457">
    <property type="entry name" value="Glyco_hydro_11"/>
    <property type="match status" value="1"/>
</dbReference>
<dbReference type="PRINTS" id="PR00911">
    <property type="entry name" value="GLHYDRLASE11"/>
</dbReference>
<dbReference type="SUPFAM" id="SSF49899">
    <property type="entry name" value="Concanavalin A-like lectins/glucanases"/>
    <property type="match status" value="1"/>
</dbReference>
<dbReference type="PROSITE" id="PS00776">
    <property type="entry name" value="GH11_1"/>
    <property type="match status" value="1"/>
</dbReference>
<dbReference type="PROSITE" id="PS00777">
    <property type="entry name" value="GH11_2"/>
    <property type="match status" value="1"/>
</dbReference>
<dbReference type="PROSITE" id="PS51761">
    <property type="entry name" value="GH11_3"/>
    <property type="match status" value="1"/>
</dbReference>
<keyword id="KW-0119">Carbohydrate metabolism</keyword>
<keyword id="KW-0903">Direct protein sequencing</keyword>
<keyword id="KW-0325">Glycoprotein</keyword>
<keyword id="KW-0326">Glycosidase</keyword>
<keyword id="KW-0378">Hydrolase</keyword>
<keyword id="KW-0624">Polysaccharide degradation</keyword>
<keyword id="KW-0964">Secreted</keyword>
<keyword id="KW-0732">Signal</keyword>
<keyword id="KW-0858">Xylan degradation</keyword>
<name>XYN2_HUMIN</name>
<evidence type="ECO:0000255" key="1"/>
<evidence type="ECO:0000255" key="2">
    <source>
        <dbReference type="PROSITE-ProRule" id="PRU01097"/>
    </source>
</evidence>
<evidence type="ECO:0000255" key="3">
    <source>
        <dbReference type="PROSITE-ProRule" id="PRU10062"/>
    </source>
</evidence>
<evidence type="ECO:0000255" key="4">
    <source>
        <dbReference type="PROSITE-ProRule" id="PRU10063"/>
    </source>
</evidence>
<evidence type="ECO:0000269" key="5">
    <source>
    </source>
</evidence>
<evidence type="ECO:0000305" key="6"/>
<sequence>MVSIKSVLAAATAVSSALAAPFDFVPRDNSTALQARQVTPNAEGWHNGYFYSWWSDGGGQVQYTNLEGSRYQVRWRNTGNFVGGKGWNPGTGRTINYGGYFNPQGNGYLAVYGWTRNPLVEYYVIESYGTYNPGSQAQYKGTFYTDGDQYDIFVSTRYNQPSIDGTRTFQQYWSIRKNKRVGGSVNMQNHFNAWQQHGMPLGQHYYQIVATEGYQSSGESDIYVQTH</sequence>
<reference key="1">
    <citation type="submission" date="1999-06" db="EMBL/GenBank/DDBJ databases">
        <title>Cloning of a xylanase-encoding gene from the thermophilic fungus Humicola grisea and its expression in Escherichia coli.</title>
        <authorList>
            <person name="Faria F.P."/>
            <person name="Pocas-Fonseca M.J."/>
            <person name="Azevedo M.O."/>
        </authorList>
    </citation>
    <scope>NUCLEOTIDE SEQUENCE [GENOMIC DNA]</scope>
    <source>
        <strain>60849</strain>
    </source>
</reference>
<reference key="2">
    <citation type="journal article" date="2002" name="Lett. Appl. Microbiol.">
        <title>Expression and processing of a major xylanase (XYN2) from the thermophilic fungus Humicola grisea var. thermoidea in Trichoderma reesei.</title>
        <authorList>
            <person name="de Faria F.P."/>
            <person name="Te'O V.S."/>
            <person name="Bergquist P.L."/>
            <person name="Azevedo M.O."/>
            <person name="Nevalainen K.M."/>
        </authorList>
    </citation>
    <scope>PROTEIN SEQUENCE OF 37-43</scope>
    <scope>SUBCELLULAR LOCATION</scope>
    <scope>FUNCTION</scope>
    <scope>CATALYTIC ACTIVITY</scope>
</reference>